<sequence length="247" mass="28100">MIDETRTTVDQSELDHFSRIATEWWNPQGKFRPLHQFNPTRLAYIREKICLEFNRDPVSLMPFDNLKILDIGCGGGLLCEPMARLGATVVGVDAAQTNIDVAKIHAAQNNLSIDYRTTTAEALANEGEKFDIILNMEVVEHVADVNLFINATAKMLKPQGLMFVATLNRTWKAWGFAIIGAEYILRWLPKGTHDYKKFLKPRELKNFLSKNALTVIDEIGITYNPLNDSWNRSKDMDVNYLLLAKRS</sequence>
<protein>
    <recommendedName>
        <fullName evidence="1">Ubiquinone biosynthesis O-methyltransferase</fullName>
    </recommendedName>
    <alternativeName>
        <fullName evidence="1">2-polyprenyl-6-hydroxyphenol methylase</fullName>
        <ecNumber evidence="1">2.1.1.222</ecNumber>
    </alternativeName>
    <alternativeName>
        <fullName evidence="1">3-demethylubiquinone 3-O-methyltransferase</fullName>
        <ecNumber evidence="1">2.1.1.64</ecNumber>
    </alternativeName>
</protein>
<gene>
    <name evidence="1" type="primary">ubiG</name>
    <name type="ordered locus">BT_0612</name>
</gene>
<evidence type="ECO:0000255" key="1">
    <source>
        <dbReference type="HAMAP-Rule" id="MF_00472"/>
    </source>
</evidence>
<reference key="1">
    <citation type="journal article" date="2007" name="Nat. Genet.">
        <title>Genomic analysis of Bartonella identifies type IV secretion systems as host adaptability factors.</title>
        <authorList>
            <person name="Saenz H.L."/>
            <person name="Engel P."/>
            <person name="Stoeckli M.C."/>
            <person name="Lanz C."/>
            <person name="Raddatz G."/>
            <person name="Vayssier-Taussat M."/>
            <person name="Birtles R."/>
            <person name="Schuster S.C."/>
            <person name="Dehio C."/>
        </authorList>
    </citation>
    <scope>NUCLEOTIDE SEQUENCE [LARGE SCALE GENOMIC DNA]</scope>
    <source>
        <strain>CIP 105476 / IBS 506</strain>
    </source>
</reference>
<name>UBIG_BART1</name>
<feature type="chain" id="PRO_1000081213" description="Ubiquinone biosynthesis O-methyltransferase">
    <location>
        <begin position="1"/>
        <end position="247"/>
    </location>
</feature>
<feature type="binding site" evidence="1">
    <location>
        <position position="41"/>
    </location>
    <ligand>
        <name>S-adenosyl-L-methionine</name>
        <dbReference type="ChEBI" id="CHEBI:59789"/>
    </ligand>
</feature>
<feature type="binding site" evidence="1">
    <location>
        <position position="72"/>
    </location>
    <ligand>
        <name>S-adenosyl-L-methionine</name>
        <dbReference type="ChEBI" id="CHEBI:59789"/>
    </ligand>
</feature>
<feature type="binding site" evidence="1">
    <location>
        <position position="93"/>
    </location>
    <ligand>
        <name>S-adenosyl-L-methionine</name>
        <dbReference type="ChEBI" id="CHEBI:59789"/>
    </ligand>
</feature>
<feature type="binding site" evidence="1">
    <location>
        <position position="136"/>
    </location>
    <ligand>
        <name>S-adenosyl-L-methionine</name>
        <dbReference type="ChEBI" id="CHEBI:59789"/>
    </ligand>
</feature>
<comment type="function">
    <text evidence="1">O-methyltransferase that catalyzes the 2 O-methylation steps in the ubiquinone biosynthetic pathway.</text>
</comment>
<comment type="catalytic activity">
    <reaction evidence="1">
        <text>a 3-demethylubiquinol + S-adenosyl-L-methionine = a ubiquinol + S-adenosyl-L-homocysteine + H(+)</text>
        <dbReference type="Rhea" id="RHEA:44380"/>
        <dbReference type="Rhea" id="RHEA-COMP:9566"/>
        <dbReference type="Rhea" id="RHEA-COMP:10914"/>
        <dbReference type="ChEBI" id="CHEBI:15378"/>
        <dbReference type="ChEBI" id="CHEBI:17976"/>
        <dbReference type="ChEBI" id="CHEBI:57856"/>
        <dbReference type="ChEBI" id="CHEBI:59789"/>
        <dbReference type="ChEBI" id="CHEBI:84422"/>
        <dbReference type="EC" id="2.1.1.64"/>
    </reaction>
</comment>
<comment type="catalytic activity">
    <reaction evidence="1">
        <text>a 3-(all-trans-polyprenyl)benzene-1,2-diol + S-adenosyl-L-methionine = a 2-methoxy-6-(all-trans-polyprenyl)phenol + S-adenosyl-L-homocysteine + H(+)</text>
        <dbReference type="Rhea" id="RHEA:31411"/>
        <dbReference type="Rhea" id="RHEA-COMP:9550"/>
        <dbReference type="Rhea" id="RHEA-COMP:9551"/>
        <dbReference type="ChEBI" id="CHEBI:15378"/>
        <dbReference type="ChEBI" id="CHEBI:57856"/>
        <dbReference type="ChEBI" id="CHEBI:59789"/>
        <dbReference type="ChEBI" id="CHEBI:62729"/>
        <dbReference type="ChEBI" id="CHEBI:62731"/>
        <dbReference type="EC" id="2.1.1.222"/>
    </reaction>
</comment>
<comment type="pathway">
    <text evidence="1">Cofactor biosynthesis; ubiquinone biosynthesis.</text>
</comment>
<comment type="similarity">
    <text evidence="1">Belongs to the methyltransferase superfamily. UbiG/COQ3 family.</text>
</comment>
<accession>A9IQF4</accession>
<dbReference type="EC" id="2.1.1.222" evidence="1"/>
<dbReference type="EC" id="2.1.1.64" evidence="1"/>
<dbReference type="EMBL" id="AM260525">
    <property type="protein sequence ID" value="CAK01051.1"/>
    <property type="molecule type" value="Genomic_DNA"/>
</dbReference>
<dbReference type="RefSeq" id="WP_012231145.1">
    <property type="nucleotide sequence ID" value="NC_010161.1"/>
</dbReference>
<dbReference type="SMR" id="A9IQF4"/>
<dbReference type="KEGG" id="btr:BT_0612"/>
<dbReference type="eggNOG" id="COG2227">
    <property type="taxonomic scope" value="Bacteria"/>
</dbReference>
<dbReference type="HOGENOM" id="CLU_042432_0_0_5"/>
<dbReference type="UniPathway" id="UPA00232"/>
<dbReference type="Proteomes" id="UP000001592">
    <property type="component" value="Chromosome"/>
</dbReference>
<dbReference type="GO" id="GO:0102208">
    <property type="term" value="F:2-polyprenyl-6-hydroxyphenol methylase activity"/>
    <property type="evidence" value="ECO:0007669"/>
    <property type="project" value="UniProtKB-EC"/>
</dbReference>
<dbReference type="GO" id="GO:0061542">
    <property type="term" value="F:3-demethylubiquinol 3-O-methyltransferase activity"/>
    <property type="evidence" value="ECO:0007669"/>
    <property type="project" value="UniProtKB-UniRule"/>
</dbReference>
<dbReference type="GO" id="GO:0010420">
    <property type="term" value="F:polyprenyldihydroxybenzoate methyltransferase activity"/>
    <property type="evidence" value="ECO:0007669"/>
    <property type="project" value="InterPro"/>
</dbReference>
<dbReference type="GO" id="GO:0032259">
    <property type="term" value="P:methylation"/>
    <property type="evidence" value="ECO:0007669"/>
    <property type="project" value="UniProtKB-KW"/>
</dbReference>
<dbReference type="CDD" id="cd02440">
    <property type="entry name" value="AdoMet_MTases"/>
    <property type="match status" value="1"/>
</dbReference>
<dbReference type="Gene3D" id="3.40.50.150">
    <property type="entry name" value="Vaccinia Virus protein VP39"/>
    <property type="match status" value="1"/>
</dbReference>
<dbReference type="HAMAP" id="MF_00472">
    <property type="entry name" value="UbiG"/>
    <property type="match status" value="1"/>
</dbReference>
<dbReference type="InterPro" id="IPR029063">
    <property type="entry name" value="SAM-dependent_MTases_sf"/>
</dbReference>
<dbReference type="InterPro" id="IPR010233">
    <property type="entry name" value="UbiG_MeTrfase"/>
</dbReference>
<dbReference type="NCBIfam" id="TIGR01983">
    <property type="entry name" value="UbiG"/>
    <property type="match status" value="1"/>
</dbReference>
<dbReference type="PANTHER" id="PTHR43464">
    <property type="entry name" value="METHYLTRANSFERASE"/>
    <property type="match status" value="1"/>
</dbReference>
<dbReference type="PANTHER" id="PTHR43464:SF19">
    <property type="entry name" value="UBIQUINONE BIOSYNTHESIS O-METHYLTRANSFERASE, MITOCHONDRIAL"/>
    <property type="match status" value="1"/>
</dbReference>
<dbReference type="Pfam" id="PF13489">
    <property type="entry name" value="Methyltransf_23"/>
    <property type="match status" value="1"/>
</dbReference>
<dbReference type="SUPFAM" id="SSF53335">
    <property type="entry name" value="S-adenosyl-L-methionine-dependent methyltransferases"/>
    <property type="match status" value="1"/>
</dbReference>
<keyword id="KW-0489">Methyltransferase</keyword>
<keyword id="KW-0949">S-adenosyl-L-methionine</keyword>
<keyword id="KW-0808">Transferase</keyword>
<keyword id="KW-0831">Ubiquinone biosynthesis</keyword>
<proteinExistence type="inferred from homology"/>
<organism>
    <name type="scientific">Bartonella tribocorum (strain CIP 105476 / IBS 506)</name>
    <dbReference type="NCBI Taxonomy" id="382640"/>
    <lineage>
        <taxon>Bacteria</taxon>
        <taxon>Pseudomonadati</taxon>
        <taxon>Pseudomonadota</taxon>
        <taxon>Alphaproteobacteria</taxon>
        <taxon>Hyphomicrobiales</taxon>
        <taxon>Bartonellaceae</taxon>
        <taxon>Bartonella</taxon>
    </lineage>
</organism>